<protein>
    <recommendedName>
        <fullName evidence="1">Methylthioribose-1-phosphate isomerase</fullName>
        <shortName evidence="1">M1Pi</shortName>
        <shortName evidence="1">MTR-1-P isomerase</shortName>
        <ecNumber evidence="1">5.3.1.23</ecNumber>
    </recommendedName>
    <alternativeName>
        <fullName evidence="1">S-methyl-5-thioribose-1-phosphate isomerase</fullName>
    </alternativeName>
    <alternativeName>
        <fullName evidence="1">Translation initiation factor eIF-2B subunit alpha/beta/delta-like protein</fullName>
    </alternativeName>
</protein>
<dbReference type="EC" id="5.3.1.23" evidence="1"/>
<dbReference type="EMBL" id="DS499598">
    <property type="protein sequence ID" value="EDP49958.1"/>
    <property type="molecule type" value="Genomic_DNA"/>
</dbReference>
<dbReference type="SMR" id="B0Y5C3"/>
<dbReference type="EnsemblFungi" id="EDP49958">
    <property type="protein sequence ID" value="EDP49958"/>
    <property type="gene ID" value="AFUB_062900"/>
</dbReference>
<dbReference type="VEuPathDB" id="FungiDB:AFUB_062900"/>
<dbReference type="HOGENOM" id="CLU_016218_1_3_1"/>
<dbReference type="OrthoDB" id="119827at5052"/>
<dbReference type="PhylomeDB" id="B0Y5C3"/>
<dbReference type="UniPathway" id="UPA00904">
    <property type="reaction ID" value="UER00874"/>
</dbReference>
<dbReference type="Proteomes" id="UP000001699">
    <property type="component" value="Unassembled WGS sequence"/>
</dbReference>
<dbReference type="GO" id="GO:0005737">
    <property type="term" value="C:cytoplasm"/>
    <property type="evidence" value="ECO:0007669"/>
    <property type="project" value="UniProtKB-SubCell"/>
</dbReference>
<dbReference type="GO" id="GO:0005634">
    <property type="term" value="C:nucleus"/>
    <property type="evidence" value="ECO:0007669"/>
    <property type="project" value="UniProtKB-SubCell"/>
</dbReference>
<dbReference type="GO" id="GO:0046523">
    <property type="term" value="F:S-methyl-5-thioribose-1-phosphate isomerase activity"/>
    <property type="evidence" value="ECO:0007669"/>
    <property type="project" value="UniProtKB-UniRule"/>
</dbReference>
<dbReference type="GO" id="GO:0019509">
    <property type="term" value="P:L-methionine salvage from methylthioadenosine"/>
    <property type="evidence" value="ECO:0007669"/>
    <property type="project" value="UniProtKB-UniRule"/>
</dbReference>
<dbReference type="FunFam" id="1.20.120.420:FF:000002">
    <property type="entry name" value="Methylthioribose-1-phosphate isomerase"/>
    <property type="match status" value="1"/>
</dbReference>
<dbReference type="FunFam" id="3.40.50.10470:FF:000010">
    <property type="entry name" value="Methylthioribose-1-phosphate isomerase"/>
    <property type="match status" value="1"/>
</dbReference>
<dbReference type="Gene3D" id="1.20.120.420">
    <property type="entry name" value="translation initiation factor eif-2b, domain 1"/>
    <property type="match status" value="1"/>
</dbReference>
<dbReference type="Gene3D" id="3.40.50.10470">
    <property type="entry name" value="Translation initiation factor eif-2b, domain 2"/>
    <property type="match status" value="1"/>
</dbReference>
<dbReference type="HAMAP" id="MF_01678">
    <property type="entry name" value="Salvage_MtnA"/>
    <property type="match status" value="1"/>
</dbReference>
<dbReference type="InterPro" id="IPR000649">
    <property type="entry name" value="IF-2B-related"/>
</dbReference>
<dbReference type="InterPro" id="IPR005251">
    <property type="entry name" value="IF-M1Pi"/>
</dbReference>
<dbReference type="InterPro" id="IPR042529">
    <property type="entry name" value="IF_2B-like_C"/>
</dbReference>
<dbReference type="InterPro" id="IPR011559">
    <property type="entry name" value="Initiation_fac_2B_a/b/d"/>
</dbReference>
<dbReference type="InterPro" id="IPR027363">
    <property type="entry name" value="M1Pi_N"/>
</dbReference>
<dbReference type="InterPro" id="IPR037171">
    <property type="entry name" value="NagB/RpiA_transferase-like"/>
</dbReference>
<dbReference type="NCBIfam" id="TIGR00524">
    <property type="entry name" value="eIF-2B_rel"/>
    <property type="match status" value="1"/>
</dbReference>
<dbReference type="NCBIfam" id="NF004326">
    <property type="entry name" value="PRK05720.1"/>
    <property type="match status" value="1"/>
</dbReference>
<dbReference type="NCBIfam" id="TIGR00512">
    <property type="entry name" value="salvage_mtnA"/>
    <property type="match status" value="1"/>
</dbReference>
<dbReference type="PANTHER" id="PTHR43475">
    <property type="entry name" value="METHYLTHIORIBOSE-1-PHOSPHATE ISOMERASE"/>
    <property type="match status" value="1"/>
</dbReference>
<dbReference type="PANTHER" id="PTHR43475:SF1">
    <property type="entry name" value="METHYLTHIORIBOSE-1-PHOSPHATE ISOMERASE"/>
    <property type="match status" value="1"/>
</dbReference>
<dbReference type="Pfam" id="PF01008">
    <property type="entry name" value="IF-2B"/>
    <property type="match status" value="1"/>
</dbReference>
<dbReference type="SUPFAM" id="SSF100950">
    <property type="entry name" value="NagB/RpiA/CoA transferase-like"/>
    <property type="match status" value="1"/>
</dbReference>
<name>MTNA_ASPFC</name>
<keyword id="KW-0028">Amino-acid biosynthesis</keyword>
<keyword id="KW-0963">Cytoplasm</keyword>
<keyword id="KW-0413">Isomerase</keyword>
<keyword id="KW-0486">Methionine biosynthesis</keyword>
<keyword id="KW-0539">Nucleus</keyword>
<comment type="function">
    <text evidence="1">Catalyzes the interconversion of methylthioribose-1-phosphate (MTR-1-P) into methylthioribulose-1-phosphate (MTRu-1-P).</text>
</comment>
<comment type="catalytic activity">
    <reaction evidence="1">
        <text>5-(methylsulfanyl)-alpha-D-ribose 1-phosphate = 5-(methylsulfanyl)-D-ribulose 1-phosphate</text>
        <dbReference type="Rhea" id="RHEA:19989"/>
        <dbReference type="ChEBI" id="CHEBI:58533"/>
        <dbReference type="ChEBI" id="CHEBI:58548"/>
        <dbReference type="EC" id="5.3.1.23"/>
    </reaction>
</comment>
<comment type="pathway">
    <text evidence="1">Amino-acid biosynthesis; L-methionine biosynthesis via salvage pathway; L-methionine from S-methyl-5-thio-alpha-D-ribose 1-phosphate: step 1/6.</text>
</comment>
<comment type="subcellular location">
    <subcellularLocation>
        <location evidence="1">Cytoplasm</location>
    </subcellularLocation>
    <subcellularLocation>
        <location evidence="1">Nucleus</location>
    </subcellularLocation>
</comment>
<comment type="similarity">
    <text evidence="1">Belongs to the eIF-2B alpha/beta/delta subunits family. MtnA subfamily.</text>
</comment>
<evidence type="ECO:0000255" key="1">
    <source>
        <dbReference type="HAMAP-Rule" id="MF_03119"/>
    </source>
</evidence>
<accession>B0Y5C3</accession>
<proteinExistence type="inferred from homology"/>
<feature type="chain" id="PRO_0000402014" description="Methylthioribose-1-phosphate isomerase">
    <location>
        <begin position="1"/>
        <end position="387"/>
    </location>
</feature>
<feature type="active site" description="Proton donor" evidence="1">
    <location>
        <position position="257"/>
    </location>
</feature>
<feature type="site" description="Transition state stabilizer" evidence="1">
    <location>
        <position position="175"/>
    </location>
</feature>
<organism>
    <name type="scientific">Aspergillus fumigatus (strain CBS 144.89 / FGSC A1163 / CEA10)</name>
    <name type="common">Neosartorya fumigata</name>
    <dbReference type="NCBI Taxonomy" id="451804"/>
    <lineage>
        <taxon>Eukaryota</taxon>
        <taxon>Fungi</taxon>
        <taxon>Dikarya</taxon>
        <taxon>Ascomycota</taxon>
        <taxon>Pezizomycotina</taxon>
        <taxon>Eurotiomycetes</taxon>
        <taxon>Eurotiomycetidae</taxon>
        <taxon>Eurotiales</taxon>
        <taxon>Aspergillaceae</taxon>
        <taxon>Aspergillus</taxon>
        <taxon>Aspergillus subgen. Fumigati</taxon>
    </lineage>
</organism>
<reference key="1">
    <citation type="journal article" date="2008" name="PLoS Genet.">
        <title>Genomic islands in the pathogenic filamentous fungus Aspergillus fumigatus.</title>
        <authorList>
            <person name="Fedorova N.D."/>
            <person name="Khaldi N."/>
            <person name="Joardar V.S."/>
            <person name="Maiti R."/>
            <person name="Amedeo P."/>
            <person name="Anderson M.J."/>
            <person name="Crabtree J."/>
            <person name="Silva J.C."/>
            <person name="Badger J.H."/>
            <person name="Albarraq A."/>
            <person name="Angiuoli S."/>
            <person name="Bussey H."/>
            <person name="Bowyer P."/>
            <person name="Cotty P.J."/>
            <person name="Dyer P.S."/>
            <person name="Egan A."/>
            <person name="Galens K."/>
            <person name="Fraser-Liggett C.M."/>
            <person name="Haas B.J."/>
            <person name="Inman J.M."/>
            <person name="Kent R."/>
            <person name="Lemieux S."/>
            <person name="Malavazi I."/>
            <person name="Orvis J."/>
            <person name="Roemer T."/>
            <person name="Ronning C.M."/>
            <person name="Sundaram J.P."/>
            <person name="Sutton G."/>
            <person name="Turner G."/>
            <person name="Venter J.C."/>
            <person name="White O.R."/>
            <person name="Whitty B.R."/>
            <person name="Youngman P."/>
            <person name="Wolfe K.H."/>
            <person name="Goldman G.H."/>
            <person name="Wortman J.R."/>
            <person name="Jiang B."/>
            <person name="Denning D.W."/>
            <person name="Nierman W.C."/>
        </authorList>
    </citation>
    <scope>NUCLEOTIDE SEQUENCE [LARGE SCALE GENOMIC DNA]</scope>
    <source>
        <strain>CBS 144.89 / FGSC A1163 / CEA10</strain>
    </source>
</reference>
<sequence length="387" mass="41591">MASILQAIRYSHGKLAIIDQLQLPYVEKFITIRTSEDAWHAIKEMRVRGAPAIAIVAALALASELNTLIIHDKLSSRAEEVKLFIREKLDYLVSSRPTAVNLSDAARKLESTISGHADTPGATGRTVAEAFIRAAEEMMTKDLDDNMKIGQNGAEWIIKHALARHKSTATVLTHCNTGSLATSGYGTALGVIRSLASKKALEHAYCTETRPYNQGSRLTAFELVHDRLPATLITDSMVAALLASTKAEVDAIVVGADRVAANGDTANKIGTYGLAVLAKYHGVKFLVAAPLTTIDLGTKSGEDIVIEERPSAEVTKIRGPVDGDHPADIVKLETVHIAAKGIDVWNPAFDVTPSTLIDGIITEVGVIEKEADGQFHLERLFIDNSAS</sequence>
<gene>
    <name type="primary">mri1</name>
    <name type="ORF">AFUB_062900</name>
</gene>